<reference key="1">
    <citation type="journal article" date="1999" name="DNA Res.">
        <title>Complete genome sequence of an aerobic hyper-thermophilic crenarchaeon, Aeropyrum pernix K1.</title>
        <authorList>
            <person name="Kawarabayasi Y."/>
            <person name="Hino Y."/>
            <person name="Horikawa H."/>
            <person name="Yamazaki S."/>
            <person name="Haikawa Y."/>
            <person name="Jin-no K."/>
            <person name="Takahashi M."/>
            <person name="Sekine M."/>
            <person name="Baba S."/>
            <person name="Ankai A."/>
            <person name="Kosugi H."/>
            <person name="Hosoyama A."/>
            <person name="Fukui S."/>
            <person name="Nagai Y."/>
            <person name="Nishijima K."/>
            <person name="Nakazawa H."/>
            <person name="Takamiya M."/>
            <person name="Masuda S."/>
            <person name="Funahashi T."/>
            <person name="Tanaka T."/>
            <person name="Kudoh Y."/>
            <person name="Yamazaki J."/>
            <person name="Kushida N."/>
            <person name="Oguchi A."/>
            <person name="Aoki K."/>
            <person name="Kubota K."/>
            <person name="Nakamura Y."/>
            <person name="Nomura N."/>
            <person name="Sako Y."/>
            <person name="Kikuchi H."/>
        </authorList>
    </citation>
    <scope>NUCLEOTIDE SEQUENCE [LARGE SCALE GENOMIC DNA]</scope>
    <source>
        <strain>ATCC 700893 / DSM 11879 / JCM 9820 / NBRC 100138 / K1</strain>
    </source>
</reference>
<keyword id="KW-0963">Cytoplasm</keyword>
<keyword id="KW-0378">Hydrolase</keyword>
<keyword id="KW-0460">Magnesium</keyword>
<keyword id="KW-0479">Metal-binding</keyword>
<keyword id="KW-1185">Reference proteome</keyword>
<organism>
    <name type="scientific">Aeropyrum pernix (strain ATCC 700893 / DSM 11879 / JCM 9820 / NBRC 100138 / K1)</name>
    <dbReference type="NCBI Taxonomy" id="272557"/>
    <lineage>
        <taxon>Archaea</taxon>
        <taxon>Thermoproteota</taxon>
        <taxon>Thermoprotei</taxon>
        <taxon>Desulfurococcales</taxon>
        <taxon>Desulfurococcaceae</taxon>
        <taxon>Aeropyrum</taxon>
    </lineage>
</organism>
<gene>
    <name evidence="1" type="primary">ppa</name>
    <name type="ordered locus">APE_1692.1</name>
</gene>
<evidence type="ECO:0000255" key="1">
    <source>
        <dbReference type="HAMAP-Rule" id="MF_00209"/>
    </source>
</evidence>
<sequence>MTGCLKIGPGDEAPDVVNVVIEIPMNSSVKYEFDKEACIVKVDRFLYTSMVYPFNYGFIPGTLEEDGDPVDVLVISREPVAPGSLIEAVPVAVLDMEDEEGPDSKVVAVPKAKLDPLFASYKDVGDIPDALKSKIKHFFEHYKELEPGKWVRVTGWRPAADAKEIIRRAIERYKGA</sequence>
<proteinExistence type="inferred from homology"/>
<dbReference type="EC" id="3.6.1.1" evidence="1"/>
<dbReference type="EMBL" id="BA000002">
    <property type="protein sequence ID" value="BAA80693.2"/>
    <property type="molecule type" value="Genomic_DNA"/>
</dbReference>
<dbReference type="PIR" id="H72550">
    <property type="entry name" value="H72550"/>
</dbReference>
<dbReference type="RefSeq" id="WP_010866532.1">
    <property type="nucleotide sequence ID" value="NC_000854.2"/>
</dbReference>
<dbReference type="SMR" id="Q9YBA5"/>
<dbReference type="STRING" id="272557.APE_1692.1"/>
<dbReference type="EnsemblBacteria" id="BAA80693">
    <property type="protein sequence ID" value="BAA80693"/>
    <property type="gene ID" value="APE_1692.1"/>
</dbReference>
<dbReference type="GeneID" id="1446175"/>
<dbReference type="KEGG" id="ape:APE_1692.1"/>
<dbReference type="PATRIC" id="fig|272557.25.peg.1136"/>
<dbReference type="eggNOG" id="arCOG01711">
    <property type="taxonomic scope" value="Archaea"/>
</dbReference>
<dbReference type="Proteomes" id="UP000002518">
    <property type="component" value="Chromosome"/>
</dbReference>
<dbReference type="GO" id="GO:0005737">
    <property type="term" value="C:cytoplasm"/>
    <property type="evidence" value="ECO:0007669"/>
    <property type="project" value="UniProtKB-SubCell"/>
</dbReference>
<dbReference type="GO" id="GO:0004427">
    <property type="term" value="F:inorganic diphosphate phosphatase activity"/>
    <property type="evidence" value="ECO:0007669"/>
    <property type="project" value="UniProtKB-UniRule"/>
</dbReference>
<dbReference type="GO" id="GO:0000287">
    <property type="term" value="F:magnesium ion binding"/>
    <property type="evidence" value="ECO:0007669"/>
    <property type="project" value="UniProtKB-UniRule"/>
</dbReference>
<dbReference type="GO" id="GO:0006796">
    <property type="term" value="P:phosphate-containing compound metabolic process"/>
    <property type="evidence" value="ECO:0007669"/>
    <property type="project" value="InterPro"/>
</dbReference>
<dbReference type="CDD" id="cd00412">
    <property type="entry name" value="pyrophosphatase"/>
    <property type="match status" value="1"/>
</dbReference>
<dbReference type="FunFam" id="3.90.80.10:FF:000003">
    <property type="entry name" value="Inorganic pyrophosphatase"/>
    <property type="match status" value="1"/>
</dbReference>
<dbReference type="Gene3D" id="3.90.80.10">
    <property type="entry name" value="Inorganic pyrophosphatase"/>
    <property type="match status" value="1"/>
</dbReference>
<dbReference type="HAMAP" id="MF_00209">
    <property type="entry name" value="Inorganic_PPase"/>
    <property type="match status" value="1"/>
</dbReference>
<dbReference type="InterPro" id="IPR008162">
    <property type="entry name" value="Pyrophosphatase"/>
</dbReference>
<dbReference type="InterPro" id="IPR036649">
    <property type="entry name" value="Pyrophosphatase_sf"/>
</dbReference>
<dbReference type="NCBIfam" id="NF002317">
    <property type="entry name" value="PRK01250.1"/>
    <property type="match status" value="1"/>
</dbReference>
<dbReference type="PANTHER" id="PTHR10286">
    <property type="entry name" value="INORGANIC PYROPHOSPHATASE"/>
    <property type="match status" value="1"/>
</dbReference>
<dbReference type="Pfam" id="PF00719">
    <property type="entry name" value="Pyrophosphatase"/>
    <property type="match status" value="1"/>
</dbReference>
<dbReference type="SUPFAM" id="SSF50324">
    <property type="entry name" value="Inorganic pyrophosphatase"/>
    <property type="match status" value="1"/>
</dbReference>
<dbReference type="PROSITE" id="PS00387">
    <property type="entry name" value="PPASE"/>
    <property type="match status" value="1"/>
</dbReference>
<comment type="function">
    <text evidence="1">Catalyzes the hydrolysis of inorganic pyrophosphate (PPi) forming two phosphate ions.</text>
</comment>
<comment type="catalytic activity">
    <reaction evidence="1">
        <text>diphosphate + H2O = 2 phosphate + H(+)</text>
        <dbReference type="Rhea" id="RHEA:24576"/>
        <dbReference type="ChEBI" id="CHEBI:15377"/>
        <dbReference type="ChEBI" id="CHEBI:15378"/>
        <dbReference type="ChEBI" id="CHEBI:33019"/>
        <dbReference type="ChEBI" id="CHEBI:43474"/>
        <dbReference type="EC" id="3.6.1.1"/>
    </reaction>
</comment>
<comment type="cofactor">
    <cofactor evidence="1">
        <name>Mg(2+)</name>
        <dbReference type="ChEBI" id="CHEBI:18420"/>
    </cofactor>
</comment>
<comment type="subunit">
    <text evidence="1">Homohexamer.</text>
</comment>
<comment type="subcellular location">
    <subcellularLocation>
        <location evidence="1">Cytoplasm</location>
    </subcellularLocation>
</comment>
<comment type="similarity">
    <text evidence="1">Belongs to the PPase family.</text>
</comment>
<accession>Q9YBA5</accession>
<feature type="chain" id="PRO_0000137547" description="Inorganic pyrophosphatase">
    <location>
        <begin position="1"/>
        <end position="176"/>
    </location>
</feature>
<feature type="binding site" evidence="1">
    <location>
        <position position="30"/>
    </location>
    <ligand>
        <name>substrate</name>
    </ligand>
</feature>
<feature type="binding site" evidence="1">
    <location>
        <position position="44"/>
    </location>
    <ligand>
        <name>substrate</name>
    </ligand>
</feature>
<feature type="binding site" evidence="1">
    <location>
        <position position="56"/>
    </location>
    <ligand>
        <name>substrate</name>
    </ligand>
</feature>
<feature type="binding site" evidence="1">
    <location>
        <position position="66"/>
    </location>
    <ligand>
        <name>Mg(2+)</name>
        <dbReference type="ChEBI" id="CHEBI:18420"/>
        <label>1</label>
    </ligand>
</feature>
<feature type="binding site" evidence="1">
    <location>
        <position position="71"/>
    </location>
    <ligand>
        <name>Mg(2+)</name>
        <dbReference type="ChEBI" id="CHEBI:18420"/>
        <label>1</label>
    </ligand>
</feature>
<feature type="binding site" evidence="1">
    <location>
        <position position="71"/>
    </location>
    <ligand>
        <name>Mg(2+)</name>
        <dbReference type="ChEBI" id="CHEBI:18420"/>
        <label>2</label>
    </ligand>
</feature>
<feature type="binding site" evidence="1">
    <location>
        <position position="103"/>
    </location>
    <ligand>
        <name>Mg(2+)</name>
        <dbReference type="ChEBI" id="CHEBI:18420"/>
        <label>1</label>
    </ligand>
</feature>
<feature type="binding site" evidence="1">
    <location>
        <position position="142"/>
    </location>
    <ligand>
        <name>substrate</name>
    </ligand>
</feature>
<protein>
    <recommendedName>
        <fullName evidence="1">Inorganic pyrophosphatase</fullName>
        <ecNumber evidence="1">3.6.1.1</ecNumber>
    </recommendedName>
    <alternativeName>
        <fullName evidence="1">Pyrophosphate phospho-hydrolase</fullName>
        <shortName evidence="1">PPase</shortName>
    </alternativeName>
</protein>
<name>IPYR_AERPE</name>